<reference key="1">
    <citation type="journal article" date="1997" name="J. Virol.">
        <title>Primary structure of the alcelaphine herpesvirus 1 genome.</title>
        <authorList>
            <person name="Ensser A."/>
            <person name="Pflanz R."/>
            <person name="Fleckenstein B."/>
        </authorList>
    </citation>
    <scope>NUCLEOTIDE SEQUENCE [LARGE SCALE GENOMIC DNA]</scope>
</reference>
<name>VG48_ALHV1</name>
<organismHost>
    <name type="scientific">Connochaetes taurinus</name>
    <name type="common">Blue wildebeest</name>
    <dbReference type="NCBI Taxonomy" id="9927"/>
</organismHost>
<dbReference type="EMBL" id="AF005370">
    <property type="protein sequence ID" value="AAC58094.1"/>
    <property type="molecule type" value="Genomic_DNA"/>
</dbReference>
<dbReference type="PIR" id="T03142">
    <property type="entry name" value="T03142"/>
</dbReference>
<dbReference type="RefSeq" id="NP_065546.1">
    <property type="nucleotide sequence ID" value="NC_002531.1"/>
</dbReference>
<dbReference type="SMR" id="O36397"/>
<dbReference type="KEGG" id="vg:911738"/>
<dbReference type="Proteomes" id="UP000000941">
    <property type="component" value="Segment"/>
</dbReference>
<dbReference type="InterPro" id="IPR008550">
    <property type="entry name" value="Herpesvirus_BRRF2-like"/>
</dbReference>
<dbReference type="Pfam" id="PF05734">
    <property type="entry name" value="DUF832"/>
    <property type="match status" value="1"/>
</dbReference>
<feature type="chain" id="PRO_0000405735" description="Uncharacterized gene 48 protein">
    <location>
        <begin position="1"/>
        <end position="419"/>
    </location>
</feature>
<accession>O36397</accession>
<keyword id="KW-1185">Reference proteome</keyword>
<sequence>MELPVPVAILTSNQQTKWRLLIASFSSHKNTQACLNFLRGTFCKTDDCYCAGLLVLVSLIQTEDNMIEKDRVIQMAILVRSLAEYCFDEIFQRVYPENIESMFTECSRRLALLLECECGCMECLETVKGLQKAQISYRMPRLNPHEISSYEFTLSSVYNSAVLCNSVPVSKDLLRDIVMGSHFEGGFSIEAKKEASLLAICITFCWLFYKMQQTVTGALEDIFEDMMQFAVTYKIPLESKRDLCRLDVRLLKKIKERGAFMGGNKNVVKFPIAAGTSLYKQLSAYKRQLIGDRCPFDPDYENLKKMIQDSAGLFTQTPPCTEEGSPPDITVQECQSESVGSPDKGEGDCPHPINTSPCLKQVSEQHLLALDALLAESSSCPETQTSLSGVNSDEYLSDPEVTSENYLTLEEFERKINLL</sequence>
<protein>
    <recommendedName>
        <fullName>Uncharacterized gene 48 protein</fullName>
    </recommendedName>
</protein>
<gene>
    <name type="primary">48</name>
</gene>
<organism>
    <name type="scientific">Alcelaphine herpesvirus 1 (strain C500)</name>
    <name type="common">AlHV-1</name>
    <name type="synonym">Malignant catarrhal fever virus</name>
    <dbReference type="NCBI Taxonomy" id="654901"/>
    <lineage>
        <taxon>Viruses</taxon>
        <taxon>Duplodnaviria</taxon>
        <taxon>Heunggongvirae</taxon>
        <taxon>Peploviricota</taxon>
        <taxon>Herviviricetes</taxon>
        <taxon>Herpesvirales</taxon>
        <taxon>Orthoherpesviridae</taxon>
        <taxon>Gammaherpesvirinae</taxon>
        <taxon>Macavirus</taxon>
        <taxon>Macavirus alcelaphinegamma1</taxon>
    </lineage>
</organism>
<proteinExistence type="predicted"/>